<protein>
    <recommendedName>
        <fullName evidence="1">33 kDa chaperonin</fullName>
    </recommendedName>
    <alternativeName>
        <fullName evidence="1">Heat shock protein 33 homolog</fullName>
        <shortName evidence="1">HSP33</shortName>
    </alternativeName>
</protein>
<name>HSLO_VIBCH</name>
<feature type="chain" id="PRO_0000192222" description="33 kDa chaperonin">
    <location>
        <begin position="1"/>
        <end position="291"/>
    </location>
</feature>
<feature type="disulfide bond" description="Redox-active" evidence="1">
    <location>
        <begin position="229"/>
        <end position="231"/>
    </location>
</feature>
<feature type="disulfide bond" description="Redox-active" evidence="1">
    <location>
        <begin position="262"/>
        <end position="265"/>
    </location>
</feature>
<proteinExistence type="inferred from homology"/>
<sequence>MANNMLHRYLFKDLSVRGELVQLDDTYQQMISSQEYPAAVQHLIGELLVATSLLTATLKFEGSITLQLQGNGPVSLVVINGDNNQQVRGVARWKGDIADDASLHDMLGKGHLVITIEPKQGERYQGVVGLEGDTLAQVLEGYFERSEQLKTRLWIRVGKHDGKACAAGMLLQIVPDGKGSAEDFEHLEQLTNTIKDEELFALPAEELLYRLYNQETVQLFTPQQISFRCGCSRERSAAAIVTVAREEINDILAQDGAVALHCDYCGTTYSFDSAQVAELYAPSSANGSTLH</sequence>
<dbReference type="EMBL" id="AE003852">
    <property type="protein sequence ID" value="AAF95875.1"/>
    <property type="status" value="ALT_INIT"/>
    <property type="molecule type" value="Genomic_DNA"/>
</dbReference>
<dbReference type="PIR" id="H82038">
    <property type="entry name" value="H82038"/>
</dbReference>
<dbReference type="RefSeq" id="NP_232362.1">
    <property type="nucleotide sequence ID" value="NC_002505.1"/>
</dbReference>
<dbReference type="RefSeq" id="WP_001911276.1">
    <property type="nucleotide sequence ID" value="NZ_LT906614.1"/>
</dbReference>
<dbReference type="SMR" id="Q9KNK2"/>
<dbReference type="STRING" id="243277.VC_2736"/>
<dbReference type="DNASU" id="2614899"/>
<dbReference type="EnsemblBacteria" id="AAF95875">
    <property type="protein sequence ID" value="AAF95875"/>
    <property type="gene ID" value="VC_2736"/>
</dbReference>
<dbReference type="GeneID" id="69718669"/>
<dbReference type="KEGG" id="vch:VC_2736"/>
<dbReference type="PATRIC" id="fig|243277.26.peg.2612"/>
<dbReference type="eggNOG" id="COG1281">
    <property type="taxonomic scope" value="Bacteria"/>
</dbReference>
<dbReference type="HOGENOM" id="CLU_054493_0_0_6"/>
<dbReference type="Proteomes" id="UP000000584">
    <property type="component" value="Chromosome 1"/>
</dbReference>
<dbReference type="GO" id="GO:0005737">
    <property type="term" value="C:cytoplasm"/>
    <property type="evidence" value="ECO:0000318"/>
    <property type="project" value="GO_Central"/>
</dbReference>
<dbReference type="GO" id="GO:0044183">
    <property type="term" value="F:protein folding chaperone"/>
    <property type="evidence" value="ECO:0000318"/>
    <property type="project" value="GO_Central"/>
</dbReference>
<dbReference type="GO" id="GO:0051082">
    <property type="term" value="F:unfolded protein binding"/>
    <property type="evidence" value="ECO:0007669"/>
    <property type="project" value="UniProtKB-UniRule"/>
</dbReference>
<dbReference type="GO" id="GO:0042026">
    <property type="term" value="P:protein refolding"/>
    <property type="evidence" value="ECO:0000318"/>
    <property type="project" value="GO_Central"/>
</dbReference>
<dbReference type="CDD" id="cd00498">
    <property type="entry name" value="Hsp33"/>
    <property type="match status" value="1"/>
</dbReference>
<dbReference type="Gene3D" id="1.10.287.480">
    <property type="entry name" value="helix hairpin bin"/>
    <property type="match status" value="1"/>
</dbReference>
<dbReference type="Gene3D" id="3.55.30.10">
    <property type="entry name" value="Hsp33 domain"/>
    <property type="match status" value="1"/>
</dbReference>
<dbReference type="Gene3D" id="3.90.1280.10">
    <property type="entry name" value="HSP33 redox switch-like"/>
    <property type="match status" value="1"/>
</dbReference>
<dbReference type="HAMAP" id="MF_00117">
    <property type="entry name" value="HslO"/>
    <property type="match status" value="1"/>
</dbReference>
<dbReference type="InterPro" id="IPR000397">
    <property type="entry name" value="Heat_shock_Hsp33"/>
</dbReference>
<dbReference type="InterPro" id="IPR016154">
    <property type="entry name" value="Heat_shock_Hsp33_C"/>
</dbReference>
<dbReference type="InterPro" id="IPR016153">
    <property type="entry name" value="Heat_shock_Hsp33_N"/>
</dbReference>
<dbReference type="InterPro" id="IPR023212">
    <property type="entry name" value="Hsp33_helix_hairpin_bin_dom_sf"/>
</dbReference>
<dbReference type="NCBIfam" id="NF001033">
    <property type="entry name" value="PRK00114.1"/>
    <property type="match status" value="1"/>
</dbReference>
<dbReference type="PANTHER" id="PTHR30111">
    <property type="entry name" value="33 KDA CHAPERONIN"/>
    <property type="match status" value="1"/>
</dbReference>
<dbReference type="PANTHER" id="PTHR30111:SF1">
    <property type="entry name" value="33 KDA CHAPERONIN"/>
    <property type="match status" value="1"/>
</dbReference>
<dbReference type="Pfam" id="PF01430">
    <property type="entry name" value="HSP33"/>
    <property type="match status" value="1"/>
</dbReference>
<dbReference type="PIRSF" id="PIRSF005261">
    <property type="entry name" value="Heat_shock_Hsp33"/>
    <property type="match status" value="1"/>
</dbReference>
<dbReference type="SUPFAM" id="SSF64397">
    <property type="entry name" value="Hsp33 domain"/>
    <property type="match status" value="1"/>
</dbReference>
<dbReference type="SUPFAM" id="SSF118352">
    <property type="entry name" value="HSP33 redox switch-like"/>
    <property type="match status" value="1"/>
</dbReference>
<organism>
    <name type="scientific">Vibrio cholerae serotype O1 (strain ATCC 39315 / El Tor Inaba N16961)</name>
    <dbReference type="NCBI Taxonomy" id="243277"/>
    <lineage>
        <taxon>Bacteria</taxon>
        <taxon>Pseudomonadati</taxon>
        <taxon>Pseudomonadota</taxon>
        <taxon>Gammaproteobacteria</taxon>
        <taxon>Vibrionales</taxon>
        <taxon>Vibrionaceae</taxon>
        <taxon>Vibrio</taxon>
    </lineage>
</organism>
<reference key="1">
    <citation type="journal article" date="2000" name="Nature">
        <title>DNA sequence of both chromosomes of the cholera pathogen Vibrio cholerae.</title>
        <authorList>
            <person name="Heidelberg J.F."/>
            <person name="Eisen J.A."/>
            <person name="Nelson W.C."/>
            <person name="Clayton R.A."/>
            <person name="Gwinn M.L."/>
            <person name="Dodson R.J."/>
            <person name="Haft D.H."/>
            <person name="Hickey E.K."/>
            <person name="Peterson J.D."/>
            <person name="Umayam L.A."/>
            <person name="Gill S.R."/>
            <person name="Nelson K.E."/>
            <person name="Read T.D."/>
            <person name="Tettelin H."/>
            <person name="Richardson D.L."/>
            <person name="Ermolaeva M.D."/>
            <person name="Vamathevan J.J."/>
            <person name="Bass S."/>
            <person name="Qin H."/>
            <person name="Dragoi I."/>
            <person name="Sellers P."/>
            <person name="McDonald L.A."/>
            <person name="Utterback T.R."/>
            <person name="Fleischmann R.D."/>
            <person name="Nierman W.C."/>
            <person name="White O."/>
            <person name="Salzberg S.L."/>
            <person name="Smith H.O."/>
            <person name="Colwell R.R."/>
            <person name="Mekalanos J.J."/>
            <person name="Venter J.C."/>
            <person name="Fraser C.M."/>
        </authorList>
    </citation>
    <scope>NUCLEOTIDE SEQUENCE [LARGE SCALE GENOMIC DNA]</scope>
    <source>
        <strain>ATCC 39315 / El Tor Inaba N16961</strain>
    </source>
</reference>
<keyword id="KW-0143">Chaperone</keyword>
<keyword id="KW-0963">Cytoplasm</keyword>
<keyword id="KW-1015">Disulfide bond</keyword>
<keyword id="KW-0676">Redox-active center</keyword>
<keyword id="KW-1185">Reference proteome</keyword>
<keyword id="KW-0862">Zinc</keyword>
<accession>Q9KNK2</accession>
<gene>
    <name evidence="1" type="primary">hslO</name>
    <name type="ordered locus">VC_2736</name>
</gene>
<evidence type="ECO:0000255" key="1">
    <source>
        <dbReference type="HAMAP-Rule" id="MF_00117"/>
    </source>
</evidence>
<evidence type="ECO:0000305" key="2"/>
<comment type="function">
    <text evidence="1">Redox regulated molecular chaperone. Protects both thermally unfolding and oxidatively damaged proteins from irreversible aggregation. Plays an important role in the bacterial defense system toward oxidative stress.</text>
</comment>
<comment type="subcellular location">
    <subcellularLocation>
        <location evidence="1">Cytoplasm</location>
    </subcellularLocation>
</comment>
<comment type="PTM">
    <text evidence="1">Under oxidizing conditions two disulfide bonds are formed involving the reactive cysteines. Under reducing conditions zinc is bound to the reactive cysteines and the protein is inactive.</text>
</comment>
<comment type="similarity">
    <text evidence="1">Belongs to the HSP33 family.</text>
</comment>
<comment type="sequence caution" evidence="2">
    <conflict type="erroneous initiation">
        <sequence resource="EMBL-CDS" id="AAF95875"/>
    </conflict>
</comment>